<feature type="chain" id="PRO_1000018822" description="Phosphoribosylamine--glycine ligase">
    <location>
        <begin position="1"/>
        <end position="432"/>
    </location>
</feature>
<feature type="domain" description="ATP-grasp" evidence="2">
    <location>
        <begin position="110"/>
        <end position="316"/>
    </location>
</feature>
<feature type="binding site" evidence="2">
    <location>
        <begin position="137"/>
        <end position="194"/>
    </location>
    <ligand>
        <name>ATP</name>
        <dbReference type="ChEBI" id="CHEBI:30616"/>
    </ligand>
</feature>
<feature type="binding site" evidence="2">
    <location>
        <position position="274"/>
    </location>
    <ligand>
        <name>Mg(2+)</name>
        <dbReference type="ChEBI" id="CHEBI:18420"/>
        <label>1</label>
    </ligand>
</feature>
<feature type="binding site" evidence="2">
    <location>
        <position position="274"/>
    </location>
    <ligand>
        <name>Mn(2+)</name>
        <dbReference type="ChEBI" id="CHEBI:29035"/>
        <label>1</label>
    </ligand>
</feature>
<feature type="binding site" evidence="2">
    <location>
        <position position="286"/>
    </location>
    <ligand>
        <name>Mg(2+)</name>
        <dbReference type="ChEBI" id="CHEBI:18420"/>
        <label>1</label>
    </ligand>
</feature>
<feature type="binding site" evidence="2">
    <location>
        <position position="286"/>
    </location>
    <ligand>
        <name>Mg(2+)</name>
        <dbReference type="ChEBI" id="CHEBI:18420"/>
        <label>2</label>
    </ligand>
</feature>
<feature type="binding site" evidence="2">
    <location>
        <position position="286"/>
    </location>
    <ligand>
        <name>Mn(2+)</name>
        <dbReference type="ChEBI" id="CHEBI:29035"/>
        <label>1</label>
    </ligand>
</feature>
<feature type="binding site" evidence="2">
    <location>
        <position position="286"/>
    </location>
    <ligand>
        <name>Mn(2+)</name>
        <dbReference type="ChEBI" id="CHEBI:29035"/>
        <label>2</label>
    </ligand>
</feature>
<feature type="binding site" evidence="2">
    <location>
        <position position="288"/>
    </location>
    <ligand>
        <name>Mg(2+)</name>
        <dbReference type="ChEBI" id="CHEBI:18420"/>
        <label>2</label>
    </ligand>
</feature>
<feature type="binding site" evidence="2">
    <location>
        <position position="288"/>
    </location>
    <ligand>
        <name>Mn(2+)</name>
        <dbReference type="ChEBI" id="CHEBI:29035"/>
        <label>2</label>
    </ligand>
</feature>
<evidence type="ECO:0000250" key="1"/>
<evidence type="ECO:0000255" key="2">
    <source>
        <dbReference type="HAMAP-Rule" id="MF_00138"/>
    </source>
</evidence>
<name>PUR2_METBU</name>
<reference key="1">
    <citation type="journal article" date="2009" name="ISME J.">
        <title>The genome sequence of the psychrophilic archaeon, Methanococcoides burtonii: the role of genome evolution in cold adaptation.</title>
        <authorList>
            <person name="Allen M.A."/>
            <person name="Lauro F.M."/>
            <person name="Williams T.J."/>
            <person name="Burg D."/>
            <person name="Siddiqui K.S."/>
            <person name="De Francisci D."/>
            <person name="Chong K.W."/>
            <person name="Pilak O."/>
            <person name="Chew H.H."/>
            <person name="De Maere M.Z."/>
            <person name="Ting L."/>
            <person name="Katrib M."/>
            <person name="Ng C."/>
            <person name="Sowers K.R."/>
            <person name="Galperin M.Y."/>
            <person name="Anderson I.J."/>
            <person name="Ivanova N."/>
            <person name="Dalin E."/>
            <person name="Martinez M."/>
            <person name="Lapidus A."/>
            <person name="Hauser L."/>
            <person name="Land M."/>
            <person name="Thomas T."/>
            <person name="Cavicchioli R."/>
        </authorList>
    </citation>
    <scope>NUCLEOTIDE SEQUENCE [LARGE SCALE GENOMIC DNA]</scope>
    <source>
        <strain>DSM 6242 / NBRC 107633 / OCM 468 / ACE-M</strain>
    </source>
</reference>
<proteinExistence type="inferred from homology"/>
<protein>
    <recommendedName>
        <fullName evidence="2">Phosphoribosylamine--glycine ligase</fullName>
        <ecNumber evidence="2">6.3.4.13</ecNumber>
    </recommendedName>
    <alternativeName>
        <fullName evidence="2">GARS</fullName>
    </alternativeName>
    <alternativeName>
        <fullName evidence="2">Glycinamide ribonucleotide synthetase</fullName>
    </alternativeName>
    <alternativeName>
        <fullName evidence="2">Phosphoribosylglycinamide synthetase</fullName>
    </alternativeName>
</protein>
<dbReference type="EC" id="6.3.4.13" evidence="2"/>
<dbReference type="EMBL" id="CP000300">
    <property type="protein sequence ID" value="ABE51989.1"/>
    <property type="molecule type" value="Genomic_DNA"/>
</dbReference>
<dbReference type="RefSeq" id="WP_011499138.1">
    <property type="nucleotide sequence ID" value="NC_007955.1"/>
</dbReference>
<dbReference type="SMR" id="Q12X37"/>
<dbReference type="STRING" id="259564.Mbur_1056"/>
<dbReference type="GeneID" id="3998796"/>
<dbReference type="KEGG" id="mbu:Mbur_1056"/>
<dbReference type="HOGENOM" id="CLU_027420_3_0_2"/>
<dbReference type="OrthoDB" id="146558at2157"/>
<dbReference type="UniPathway" id="UPA00074">
    <property type="reaction ID" value="UER00125"/>
</dbReference>
<dbReference type="Proteomes" id="UP000001979">
    <property type="component" value="Chromosome"/>
</dbReference>
<dbReference type="GO" id="GO:0005524">
    <property type="term" value="F:ATP binding"/>
    <property type="evidence" value="ECO:0007669"/>
    <property type="project" value="UniProtKB-KW"/>
</dbReference>
<dbReference type="GO" id="GO:0046872">
    <property type="term" value="F:metal ion binding"/>
    <property type="evidence" value="ECO:0007669"/>
    <property type="project" value="UniProtKB-KW"/>
</dbReference>
<dbReference type="GO" id="GO:0004637">
    <property type="term" value="F:phosphoribosylamine-glycine ligase activity"/>
    <property type="evidence" value="ECO:0007669"/>
    <property type="project" value="UniProtKB-UniRule"/>
</dbReference>
<dbReference type="GO" id="GO:0006189">
    <property type="term" value="P:'de novo' IMP biosynthetic process"/>
    <property type="evidence" value="ECO:0007669"/>
    <property type="project" value="UniProtKB-UniRule"/>
</dbReference>
<dbReference type="GO" id="GO:0009113">
    <property type="term" value="P:purine nucleobase biosynthetic process"/>
    <property type="evidence" value="ECO:0007669"/>
    <property type="project" value="InterPro"/>
</dbReference>
<dbReference type="Gene3D" id="3.40.50.20">
    <property type="match status" value="1"/>
</dbReference>
<dbReference type="Gene3D" id="3.30.1490.20">
    <property type="entry name" value="ATP-grasp fold, A domain"/>
    <property type="match status" value="1"/>
</dbReference>
<dbReference type="Gene3D" id="3.30.470.20">
    <property type="entry name" value="ATP-grasp fold, B domain"/>
    <property type="match status" value="1"/>
</dbReference>
<dbReference type="Gene3D" id="3.90.600.10">
    <property type="entry name" value="Phosphoribosylglycinamide synthetase, C-terminal domain"/>
    <property type="match status" value="1"/>
</dbReference>
<dbReference type="HAMAP" id="MF_00138">
    <property type="entry name" value="GARS"/>
    <property type="match status" value="1"/>
</dbReference>
<dbReference type="InterPro" id="IPR011761">
    <property type="entry name" value="ATP-grasp"/>
</dbReference>
<dbReference type="InterPro" id="IPR013815">
    <property type="entry name" value="ATP_grasp_subdomain_1"/>
</dbReference>
<dbReference type="InterPro" id="IPR016185">
    <property type="entry name" value="PreATP-grasp_dom_sf"/>
</dbReference>
<dbReference type="InterPro" id="IPR020561">
    <property type="entry name" value="PRibGlycinamid_synth_ATP-grasp"/>
</dbReference>
<dbReference type="InterPro" id="IPR000115">
    <property type="entry name" value="PRibGlycinamide_synth"/>
</dbReference>
<dbReference type="InterPro" id="IPR020560">
    <property type="entry name" value="PRibGlycinamide_synth_C-dom"/>
</dbReference>
<dbReference type="InterPro" id="IPR037123">
    <property type="entry name" value="PRibGlycinamide_synth_C_sf"/>
</dbReference>
<dbReference type="InterPro" id="IPR020559">
    <property type="entry name" value="PRibGlycinamide_synth_CS"/>
</dbReference>
<dbReference type="InterPro" id="IPR020562">
    <property type="entry name" value="PRibGlycinamide_synth_N"/>
</dbReference>
<dbReference type="InterPro" id="IPR011054">
    <property type="entry name" value="Rudment_hybrid_motif"/>
</dbReference>
<dbReference type="NCBIfam" id="TIGR00877">
    <property type="entry name" value="purD"/>
    <property type="match status" value="1"/>
</dbReference>
<dbReference type="PANTHER" id="PTHR43472">
    <property type="entry name" value="PHOSPHORIBOSYLAMINE--GLYCINE LIGASE"/>
    <property type="match status" value="1"/>
</dbReference>
<dbReference type="PANTHER" id="PTHR43472:SF1">
    <property type="entry name" value="PHOSPHORIBOSYLAMINE--GLYCINE LIGASE, CHLOROPLASTIC"/>
    <property type="match status" value="1"/>
</dbReference>
<dbReference type="Pfam" id="PF01071">
    <property type="entry name" value="GARS_A"/>
    <property type="match status" value="1"/>
</dbReference>
<dbReference type="Pfam" id="PF02843">
    <property type="entry name" value="GARS_C"/>
    <property type="match status" value="1"/>
</dbReference>
<dbReference type="Pfam" id="PF02844">
    <property type="entry name" value="GARS_N"/>
    <property type="match status" value="1"/>
</dbReference>
<dbReference type="SMART" id="SM01209">
    <property type="entry name" value="GARS_A"/>
    <property type="match status" value="1"/>
</dbReference>
<dbReference type="SMART" id="SM01210">
    <property type="entry name" value="GARS_C"/>
    <property type="match status" value="1"/>
</dbReference>
<dbReference type="SUPFAM" id="SSF56059">
    <property type="entry name" value="Glutathione synthetase ATP-binding domain-like"/>
    <property type="match status" value="1"/>
</dbReference>
<dbReference type="SUPFAM" id="SSF52440">
    <property type="entry name" value="PreATP-grasp domain"/>
    <property type="match status" value="1"/>
</dbReference>
<dbReference type="SUPFAM" id="SSF51246">
    <property type="entry name" value="Rudiment single hybrid motif"/>
    <property type="match status" value="1"/>
</dbReference>
<dbReference type="PROSITE" id="PS50975">
    <property type="entry name" value="ATP_GRASP"/>
    <property type="match status" value="1"/>
</dbReference>
<dbReference type="PROSITE" id="PS00184">
    <property type="entry name" value="GARS"/>
    <property type="match status" value="1"/>
</dbReference>
<keyword id="KW-0067">ATP-binding</keyword>
<keyword id="KW-0436">Ligase</keyword>
<keyword id="KW-0460">Magnesium</keyword>
<keyword id="KW-0464">Manganese</keyword>
<keyword id="KW-0479">Metal-binding</keyword>
<keyword id="KW-0547">Nucleotide-binding</keyword>
<keyword id="KW-0658">Purine biosynthesis</keyword>
<organism>
    <name type="scientific">Methanococcoides burtonii (strain DSM 6242 / NBRC 107633 / OCM 468 / ACE-M)</name>
    <dbReference type="NCBI Taxonomy" id="259564"/>
    <lineage>
        <taxon>Archaea</taxon>
        <taxon>Methanobacteriati</taxon>
        <taxon>Methanobacteriota</taxon>
        <taxon>Stenosarchaea group</taxon>
        <taxon>Methanomicrobia</taxon>
        <taxon>Methanosarcinales</taxon>
        <taxon>Methanosarcinaceae</taxon>
        <taxon>Methanococcoides</taxon>
    </lineage>
</organism>
<gene>
    <name evidence="2" type="primary">purD</name>
    <name type="ordered locus">Mbur_1056</name>
</gene>
<accession>Q12X37</accession>
<comment type="catalytic activity">
    <reaction evidence="2">
        <text>5-phospho-beta-D-ribosylamine + glycine + ATP = N(1)-(5-phospho-beta-D-ribosyl)glycinamide + ADP + phosphate + H(+)</text>
        <dbReference type="Rhea" id="RHEA:17453"/>
        <dbReference type="ChEBI" id="CHEBI:15378"/>
        <dbReference type="ChEBI" id="CHEBI:30616"/>
        <dbReference type="ChEBI" id="CHEBI:43474"/>
        <dbReference type="ChEBI" id="CHEBI:57305"/>
        <dbReference type="ChEBI" id="CHEBI:58681"/>
        <dbReference type="ChEBI" id="CHEBI:143788"/>
        <dbReference type="ChEBI" id="CHEBI:456216"/>
        <dbReference type="EC" id="6.3.4.13"/>
    </reaction>
</comment>
<comment type="cofactor">
    <cofactor evidence="1">
        <name>Mg(2+)</name>
        <dbReference type="ChEBI" id="CHEBI:18420"/>
    </cofactor>
    <cofactor evidence="1">
        <name>Mn(2+)</name>
        <dbReference type="ChEBI" id="CHEBI:29035"/>
    </cofactor>
    <text evidence="1">Binds 2 magnesium or manganese ions per subunit.</text>
</comment>
<comment type="pathway">
    <text evidence="2">Purine metabolism; IMP biosynthesis via de novo pathway; N(1)-(5-phospho-D-ribosyl)glycinamide from 5-phospho-alpha-D-ribose 1-diphosphate: step 2/2.</text>
</comment>
<comment type="similarity">
    <text evidence="2">Belongs to the GARS family.</text>
</comment>
<sequence length="432" mass="46602">MNVLIIGGGGRENAIADAIARSERNPALFAVMAKKNPGIAALCEDFLLAKETDVEKVVGYAREKGIEMVFIGPEAPLAVGLADALEDAGIGAVGPRKNVARIEFDKAWARNFMKDNDIEGSPAFKVFSDKEGLQEYIEELGSVAIKPAGLTGGKGVKVMGDQLPDTGAAYDYAVSLLDGDNVVVEENLVGEEFTVQAFVDGKNLAFTPCVQDHKRAFENDFGPNTGGMGSYSDSDGLLPFVTIDDLYHAREIMKATITALGATETPFKGMLYGQFILTKNGPKVIEFNARFGDPEAMNVLPLLKTDMIDVMSAVVNGTLDELDVEFLKRATVCKYAVPAGYPDEPSKDKEVVVGNIGDALLFYSSVYEKDGKVYTTSSRAVAVVGVANSITDAEVIAQNALENITGDLHFRRDIGTPELVQRRVTHMEQIRR</sequence>